<accession>P77475</accession>
<gene>
    <name type="primary">yqaB</name>
    <name type="ordered locus">b2690</name>
    <name type="ordered locus">JW2665</name>
</gene>
<proteinExistence type="evidence at protein level"/>
<organism>
    <name type="scientific">Escherichia coli (strain K12)</name>
    <dbReference type="NCBI Taxonomy" id="83333"/>
    <lineage>
        <taxon>Bacteria</taxon>
        <taxon>Pseudomonadati</taxon>
        <taxon>Pseudomonadota</taxon>
        <taxon>Gammaproteobacteria</taxon>
        <taxon>Enterobacterales</taxon>
        <taxon>Enterobacteriaceae</taxon>
        <taxon>Escherichia</taxon>
    </lineage>
</organism>
<protein>
    <recommendedName>
        <fullName>Fructose-1-phosphate phosphatase YqaB</fullName>
        <ecNumber>3.1.3.-</ecNumber>
    </recommendedName>
    <alternativeName>
        <fullName>Fructose-1-phosphatase</fullName>
    </alternativeName>
</protein>
<evidence type="ECO:0000250" key="1"/>
<evidence type="ECO:0000269" key="2">
    <source>
    </source>
</evidence>
<evidence type="ECO:0000269" key="3">
    <source>
    </source>
</evidence>
<evidence type="ECO:0000305" key="4"/>
<comment type="function">
    <text evidence="2 3">Catalyzes strongly the dephosphorylation of fructose-1-phosphate (Fru1P) and slightly the dephosphorylation of 6-phosphogluconate (6P-Glu). It has low beta-phosphoglucomutase activity.</text>
</comment>
<comment type="cofactor">
    <cofactor evidence="3">
        <name>Mg(2+)</name>
        <dbReference type="ChEBI" id="CHEBI:18420"/>
    </cofactor>
    <cofactor evidence="3">
        <name>Mn(2+)</name>
        <dbReference type="ChEBI" id="CHEBI:29035"/>
    </cofactor>
    <cofactor evidence="3">
        <name>Co(2+)</name>
        <dbReference type="ChEBI" id="CHEBI:48828"/>
    </cofactor>
    <cofactor evidence="3">
        <name>Zn(2+)</name>
        <dbReference type="ChEBI" id="CHEBI:29105"/>
    </cofactor>
    <text evidence="3">Magnesium. Can also use other divalent metal cations as manganese, cobalt or zinc.</text>
</comment>
<comment type="biophysicochemical properties">
    <kinetics>
        <KM evidence="3">1 mM for Fru1P (with magnesium ions as cofactor and at pH 9)</KM>
        <KM evidence="3">3.9 mM for 6P-Glu (with magnesium ions as cofactor and at pH 9)</KM>
    </kinetics>
    <phDependence>
        <text evidence="3">Optimum pH is between 6 and 7.5.</text>
    </phDependence>
</comment>
<comment type="similarity">
    <text evidence="4">Belongs to the HAD-like hydrolase superfamily. CbbY/CbbZ/Gph/YieH family.</text>
</comment>
<reference key="1">
    <citation type="journal article" date="1997" name="DNA Res.">
        <title>Construction of a contiguous 874-kb sequence of the Escherichia coli-K12 genome corresponding to 50.0-68.8 min on the linkage map and analysis of its sequence features.</title>
        <authorList>
            <person name="Yamamoto Y."/>
            <person name="Aiba H."/>
            <person name="Baba T."/>
            <person name="Hayashi K."/>
            <person name="Inada T."/>
            <person name="Isono K."/>
            <person name="Itoh T."/>
            <person name="Kimura S."/>
            <person name="Kitagawa M."/>
            <person name="Makino K."/>
            <person name="Miki T."/>
            <person name="Mitsuhashi N."/>
            <person name="Mizobuchi K."/>
            <person name="Mori H."/>
            <person name="Nakade S."/>
            <person name="Nakamura Y."/>
            <person name="Nashimoto H."/>
            <person name="Oshima T."/>
            <person name="Oyama S."/>
            <person name="Saito N."/>
            <person name="Sampei G."/>
            <person name="Satoh Y."/>
            <person name="Sivasundaram S."/>
            <person name="Tagami H."/>
            <person name="Takahashi H."/>
            <person name="Takeda J."/>
            <person name="Takemoto K."/>
            <person name="Uehara K."/>
            <person name="Wada C."/>
            <person name="Yamagata S."/>
            <person name="Horiuchi T."/>
        </authorList>
    </citation>
    <scope>NUCLEOTIDE SEQUENCE [LARGE SCALE GENOMIC DNA]</scope>
    <source>
        <strain>K12 / W3110 / ATCC 27325 / DSM 5911</strain>
    </source>
</reference>
<reference key="2">
    <citation type="journal article" date="1997" name="Science">
        <title>The complete genome sequence of Escherichia coli K-12.</title>
        <authorList>
            <person name="Blattner F.R."/>
            <person name="Plunkett G. III"/>
            <person name="Bloch C.A."/>
            <person name="Perna N.T."/>
            <person name="Burland V."/>
            <person name="Riley M."/>
            <person name="Collado-Vides J."/>
            <person name="Glasner J.D."/>
            <person name="Rode C.K."/>
            <person name="Mayhew G.F."/>
            <person name="Gregor J."/>
            <person name="Davis N.W."/>
            <person name="Kirkpatrick H.A."/>
            <person name="Goeden M.A."/>
            <person name="Rose D.J."/>
            <person name="Mau B."/>
            <person name="Shao Y."/>
        </authorList>
    </citation>
    <scope>NUCLEOTIDE SEQUENCE [LARGE SCALE GENOMIC DNA]</scope>
    <source>
        <strain>K12 / MG1655 / ATCC 47076</strain>
    </source>
</reference>
<reference key="3">
    <citation type="journal article" date="2006" name="Mol. Syst. Biol.">
        <title>Highly accurate genome sequences of Escherichia coli K-12 strains MG1655 and W3110.</title>
        <authorList>
            <person name="Hayashi K."/>
            <person name="Morooka N."/>
            <person name="Yamamoto Y."/>
            <person name="Fujita K."/>
            <person name="Isono K."/>
            <person name="Choi S."/>
            <person name="Ohtsubo E."/>
            <person name="Baba T."/>
            <person name="Wanner B.L."/>
            <person name="Mori H."/>
            <person name="Horiuchi T."/>
        </authorList>
    </citation>
    <scope>NUCLEOTIDE SEQUENCE [LARGE SCALE GENOMIC DNA]</scope>
    <source>
        <strain>K12 / W3110 / ATCC 27325 / DSM 5911</strain>
    </source>
</reference>
<reference key="4">
    <citation type="journal article" date="2005" name="FEMS Microbiol. Rev.">
        <title>Enzyme genomics: application of general enzymatic screens to discover new enzymes.</title>
        <authorList>
            <person name="Kuznetsova E."/>
            <person name="Proudfoot M."/>
            <person name="Sanders S.A."/>
            <person name="Reinking J."/>
            <person name="Savchenko A."/>
            <person name="Arrowsmith C.H."/>
            <person name="Edwards A.M."/>
            <person name="Yakunin A.F."/>
        </authorList>
    </citation>
    <scope>FUNCTION AS A PHOSPHATASE</scope>
</reference>
<reference key="5">
    <citation type="journal article" date="2006" name="J. Biol. Chem.">
        <title>Genome-wide analysis of substrate specificities of the Escherichia coli haloacid dehalogenase-like phosphatase family.</title>
        <authorList>
            <person name="Kuznetsova E."/>
            <person name="Proudfoot M."/>
            <person name="Gonzalez C.F."/>
            <person name="Brown G."/>
            <person name="Omelchenko M.V."/>
            <person name="Borozan I."/>
            <person name="Carmel L."/>
            <person name="Wolf Y.I."/>
            <person name="Mori H."/>
            <person name="Savchenko A.V."/>
            <person name="Arrowsmith C.H."/>
            <person name="Koonin E.V."/>
            <person name="Edwards A.M."/>
            <person name="Yakunin A.F."/>
        </authorList>
    </citation>
    <scope>FUNCTION AS A PHOSPHATASE</scope>
    <scope>BIOPHYSICOCHEMICAL PROPERTIES</scope>
    <scope>SUBSTRATE SPECIFICITY</scope>
    <scope>COFACTOR</scope>
</reference>
<name>YQAB_ECOLI</name>
<sequence length="188" mass="20780">MYERYAGLIFDMDGTILDTEPTHRKAWREVLGHYGLQYDIQAMIALNGSPTWRIAQAIIELNQADLDPHALAREKTEAVRSMLLDSVEPLPLVDVVKSWHGRRPMAVGTGSESAIAEALLAHLGLRHYFDAVVAADHVKHHKPAPDTFLLCAQRMGVQPTQCVVFEDADFGIQAARAAGMDAVDVRLL</sequence>
<feature type="chain" id="PRO_0000108063" description="Fructose-1-phosphate phosphatase YqaB">
    <location>
        <begin position="1"/>
        <end position="188"/>
    </location>
</feature>
<feature type="active site" description="Nucleophile" evidence="1">
    <location>
        <position position="11"/>
    </location>
</feature>
<feature type="binding site" evidence="1">
    <location>
        <begin position="11"/>
        <end position="13"/>
    </location>
    <ligand>
        <name>substrate</name>
    </ligand>
</feature>
<feature type="binding site" evidence="1">
    <location>
        <position position="11"/>
    </location>
    <ligand>
        <name>Mg(2+)</name>
        <dbReference type="ChEBI" id="CHEBI:18420"/>
    </ligand>
</feature>
<feature type="binding site" evidence="1">
    <location>
        <position position="13"/>
    </location>
    <ligand>
        <name>Mg(2+)</name>
        <dbReference type="ChEBI" id="CHEBI:18420"/>
    </ligand>
</feature>
<feature type="binding site" evidence="1">
    <location>
        <position position="167"/>
    </location>
    <ligand>
        <name>Mg(2+)</name>
        <dbReference type="ChEBI" id="CHEBI:18420"/>
    </ligand>
</feature>
<keyword id="KW-0378">Hydrolase</keyword>
<keyword id="KW-0460">Magnesium</keyword>
<keyword id="KW-0479">Metal-binding</keyword>
<keyword id="KW-1185">Reference proteome</keyword>
<dbReference type="EC" id="3.1.3.-"/>
<dbReference type="EMBL" id="U00096">
    <property type="protein sequence ID" value="AAC75737.1"/>
    <property type="molecule type" value="Genomic_DNA"/>
</dbReference>
<dbReference type="EMBL" id="AP009048">
    <property type="protein sequence ID" value="BAA16557.1"/>
    <property type="molecule type" value="Genomic_DNA"/>
</dbReference>
<dbReference type="PIR" id="C65049">
    <property type="entry name" value="C65049"/>
</dbReference>
<dbReference type="RefSeq" id="NP_417175.1">
    <property type="nucleotide sequence ID" value="NC_000913.3"/>
</dbReference>
<dbReference type="RefSeq" id="WP_000273290.1">
    <property type="nucleotide sequence ID" value="NZ_LN832404.1"/>
</dbReference>
<dbReference type="SMR" id="P77475"/>
<dbReference type="BioGRID" id="4262273">
    <property type="interactions" value="27"/>
</dbReference>
<dbReference type="DIP" id="DIP-12842N"/>
<dbReference type="FunCoup" id="P77475">
    <property type="interactions" value="562"/>
</dbReference>
<dbReference type="IntAct" id="P77475">
    <property type="interactions" value="5"/>
</dbReference>
<dbReference type="STRING" id="511145.b2690"/>
<dbReference type="jPOST" id="P77475"/>
<dbReference type="PaxDb" id="511145-b2690"/>
<dbReference type="DNASU" id="945776"/>
<dbReference type="EnsemblBacteria" id="AAC75737">
    <property type="protein sequence ID" value="AAC75737"/>
    <property type="gene ID" value="b2690"/>
</dbReference>
<dbReference type="GeneID" id="93779321"/>
<dbReference type="GeneID" id="945776"/>
<dbReference type="KEGG" id="ecj:JW2665"/>
<dbReference type="KEGG" id="eco:b2690"/>
<dbReference type="KEGG" id="ecoc:C3026_14810"/>
<dbReference type="PATRIC" id="fig|1411691.4.peg.4049"/>
<dbReference type="EchoBASE" id="EB3301"/>
<dbReference type="eggNOG" id="COG0637">
    <property type="taxonomic scope" value="Bacteria"/>
</dbReference>
<dbReference type="HOGENOM" id="CLU_045011_13_3_6"/>
<dbReference type="InParanoid" id="P77475"/>
<dbReference type="OMA" id="YHGRRPM"/>
<dbReference type="OrthoDB" id="9782449at2"/>
<dbReference type="PhylomeDB" id="P77475"/>
<dbReference type="BioCyc" id="EcoCyc:G7408-MONOMER"/>
<dbReference type="BioCyc" id="MetaCyc:G7408-MONOMER"/>
<dbReference type="PRO" id="PR:P77475"/>
<dbReference type="Proteomes" id="UP000000625">
    <property type="component" value="Chromosome"/>
</dbReference>
<dbReference type="GO" id="GO:0008801">
    <property type="term" value="F:beta-phosphoglucomutase activity"/>
    <property type="evidence" value="ECO:0000314"/>
    <property type="project" value="EcoliWiki"/>
</dbReference>
<dbReference type="GO" id="GO:0000287">
    <property type="term" value="F:magnesium ion binding"/>
    <property type="evidence" value="ECO:0000314"/>
    <property type="project" value="UniProtKB"/>
</dbReference>
<dbReference type="GO" id="GO:0016791">
    <property type="term" value="F:phosphatase activity"/>
    <property type="evidence" value="ECO:0000314"/>
    <property type="project" value="EcoliWiki"/>
</dbReference>
<dbReference type="GO" id="GO:0050308">
    <property type="term" value="F:sugar-phosphatase activity"/>
    <property type="evidence" value="ECO:0000314"/>
    <property type="project" value="EcoCyc"/>
</dbReference>
<dbReference type="GO" id="GO:0005975">
    <property type="term" value="P:carbohydrate metabolic process"/>
    <property type="evidence" value="ECO:0000318"/>
    <property type="project" value="GO_Central"/>
</dbReference>
<dbReference type="CDD" id="cd07505">
    <property type="entry name" value="HAD_BPGM-like"/>
    <property type="match status" value="1"/>
</dbReference>
<dbReference type="FunFam" id="1.10.150.240:FF:000002">
    <property type="entry name" value="Fructose-1-phosphate/6-phosphogluconate phosphatase"/>
    <property type="match status" value="1"/>
</dbReference>
<dbReference type="FunFam" id="3.40.50.1000:FF:000038">
    <property type="entry name" value="Fructose-1-phosphate/6-phosphogluconate phosphatase"/>
    <property type="match status" value="1"/>
</dbReference>
<dbReference type="Gene3D" id="3.40.50.1000">
    <property type="entry name" value="HAD superfamily/HAD-like"/>
    <property type="match status" value="1"/>
</dbReference>
<dbReference type="Gene3D" id="1.10.150.240">
    <property type="entry name" value="Putative phosphatase, domain 2"/>
    <property type="match status" value="1"/>
</dbReference>
<dbReference type="InterPro" id="IPR010976">
    <property type="entry name" value="B-phosphoglucomutase_hydrolase"/>
</dbReference>
<dbReference type="InterPro" id="IPR036412">
    <property type="entry name" value="HAD-like_sf"/>
</dbReference>
<dbReference type="InterPro" id="IPR051806">
    <property type="entry name" value="HAD-like_SPP"/>
</dbReference>
<dbReference type="InterPro" id="IPR006439">
    <property type="entry name" value="HAD-SF_hydro_IA"/>
</dbReference>
<dbReference type="InterPro" id="IPR023214">
    <property type="entry name" value="HAD_sf"/>
</dbReference>
<dbReference type="InterPro" id="IPR023198">
    <property type="entry name" value="PGP-like_dom2"/>
</dbReference>
<dbReference type="NCBIfam" id="TIGR01509">
    <property type="entry name" value="HAD-SF-IA-v3"/>
    <property type="match status" value="1"/>
</dbReference>
<dbReference type="NCBIfam" id="TIGR02009">
    <property type="entry name" value="PGMB-YQAB-SF"/>
    <property type="match status" value="1"/>
</dbReference>
<dbReference type="NCBIfam" id="NF008000">
    <property type="entry name" value="PRK10725.1"/>
    <property type="match status" value="1"/>
</dbReference>
<dbReference type="PANTHER" id="PTHR43481">
    <property type="entry name" value="FRUCTOSE-1-PHOSPHATE PHOSPHATASE"/>
    <property type="match status" value="1"/>
</dbReference>
<dbReference type="PANTHER" id="PTHR43481:SF4">
    <property type="entry name" value="GLYCEROL-1-PHOSPHATE PHOSPHOHYDROLASE 1-RELATED"/>
    <property type="match status" value="1"/>
</dbReference>
<dbReference type="Pfam" id="PF00702">
    <property type="entry name" value="Hydrolase"/>
    <property type="match status" value="1"/>
</dbReference>
<dbReference type="PRINTS" id="PR00413">
    <property type="entry name" value="HADHALOGNASE"/>
</dbReference>
<dbReference type="SFLD" id="SFLDG01135">
    <property type="entry name" value="C1.5.6:_HAD__Beta-PGM__Phospha"/>
    <property type="match status" value="1"/>
</dbReference>
<dbReference type="SFLD" id="SFLDS00003">
    <property type="entry name" value="Haloacid_Dehalogenase"/>
    <property type="match status" value="1"/>
</dbReference>
<dbReference type="SUPFAM" id="SSF56784">
    <property type="entry name" value="HAD-like"/>
    <property type="match status" value="1"/>
</dbReference>